<reference key="1">
    <citation type="journal article" date="1994" name="Circ. Res.">
        <title>Molecular basis of cardiac troponin T isoform heterogeneity in rabbit heart.</title>
        <authorList>
            <person name="Greig A."/>
            <person name="Hirschberg Y."/>
            <person name="Anderson P.A.W."/>
            <person name="Hainsworth C."/>
            <person name="Malouf N.N."/>
            <person name="Oakeley A.E."/>
            <person name="Kay B.K."/>
        </authorList>
    </citation>
    <scope>NUCLEOTIDE SEQUENCE [MRNA]</scope>
    <source>
        <tissue>Heart</tissue>
    </source>
</reference>
<reference key="2">
    <citation type="journal article" date="1986" name="J. Biol. Chem.">
        <title>Amino acid sequence of rabbit cardiac troponin T.</title>
        <authorList>
            <person name="Pearlstone J.R."/>
            <person name="Carpenter M.R."/>
            <person name="Smillie L.B."/>
        </authorList>
    </citation>
    <scope>PROTEIN SEQUENCE OF 2-301</scope>
    <scope>ACETYLATION AT SER-2</scope>
    <source>
        <tissue>Heart</tissue>
    </source>
</reference>
<reference key="3">
    <citation type="journal article" date="1980" name="Biochem. J.">
        <title>Isolation and some properties of troponin T kinase from rabbit skeletal muscle.</title>
        <authorList>
            <person name="Gusev N.B."/>
            <person name="Dobrovolskii A.B."/>
            <person name="Severin S.E."/>
        </authorList>
    </citation>
    <scope>PHOSPHORYLATION AT SER-2</scope>
</reference>
<name>TNNT2_RABIT</name>
<keyword id="KW-0007">Acetylation</keyword>
<keyword id="KW-0025">Alternative splicing</keyword>
<keyword id="KW-0903">Direct protein sequencing</keyword>
<keyword id="KW-0514">Muscle protein</keyword>
<keyword id="KW-0597">Phosphoprotein</keyword>
<keyword id="KW-1185">Reference proteome</keyword>
<dbReference type="EMBL" id="L40178">
    <property type="protein sequence ID" value="AAB51160.1"/>
    <property type="status" value="ALT_INIT"/>
    <property type="molecule type" value="mRNA"/>
</dbReference>
<dbReference type="PIR" id="A25345">
    <property type="entry name" value="A25345"/>
</dbReference>
<dbReference type="PIR" id="A61032">
    <property type="entry name" value="A61032"/>
</dbReference>
<dbReference type="PIR" id="B25345">
    <property type="entry name" value="B25345"/>
</dbReference>
<dbReference type="PIR" id="I46903">
    <property type="entry name" value="I46903"/>
</dbReference>
<dbReference type="FunCoup" id="P09741">
    <property type="interactions" value="26"/>
</dbReference>
<dbReference type="STRING" id="9986.ENSOCUP00000018870"/>
<dbReference type="iPTMnet" id="P09741"/>
<dbReference type="InParanoid" id="P09741"/>
<dbReference type="Proteomes" id="UP000001811">
    <property type="component" value="Unplaced"/>
</dbReference>
<dbReference type="GO" id="GO:0005865">
    <property type="term" value="C:striated muscle thin filament"/>
    <property type="evidence" value="ECO:0000250"/>
    <property type="project" value="UniProtKB"/>
</dbReference>
<dbReference type="GO" id="GO:0005861">
    <property type="term" value="C:troponin complex"/>
    <property type="evidence" value="ECO:0000250"/>
    <property type="project" value="UniProtKB"/>
</dbReference>
<dbReference type="GO" id="GO:0003779">
    <property type="term" value="F:actin binding"/>
    <property type="evidence" value="ECO:0000250"/>
    <property type="project" value="UniProtKB"/>
</dbReference>
<dbReference type="GO" id="GO:0005523">
    <property type="term" value="F:tropomyosin binding"/>
    <property type="evidence" value="ECO:0000250"/>
    <property type="project" value="UniProtKB"/>
</dbReference>
<dbReference type="GO" id="GO:0030172">
    <property type="term" value="F:troponin C binding"/>
    <property type="evidence" value="ECO:0000250"/>
    <property type="project" value="UniProtKB"/>
</dbReference>
<dbReference type="GO" id="GO:0031013">
    <property type="term" value="F:troponin I binding"/>
    <property type="evidence" value="ECO:0000250"/>
    <property type="project" value="UniProtKB"/>
</dbReference>
<dbReference type="GO" id="GO:0060048">
    <property type="term" value="P:cardiac muscle contraction"/>
    <property type="evidence" value="ECO:0007669"/>
    <property type="project" value="TreeGrafter"/>
</dbReference>
<dbReference type="GO" id="GO:0030049">
    <property type="term" value="P:muscle filament sliding"/>
    <property type="evidence" value="ECO:0000250"/>
    <property type="project" value="UniProtKB"/>
</dbReference>
<dbReference type="GO" id="GO:0032780">
    <property type="term" value="P:negative regulation of ATP-dependent activity"/>
    <property type="evidence" value="ECO:0000250"/>
    <property type="project" value="UniProtKB"/>
</dbReference>
<dbReference type="GO" id="GO:0032781">
    <property type="term" value="P:positive regulation of ATP-dependent activity"/>
    <property type="evidence" value="ECO:0000250"/>
    <property type="project" value="UniProtKB"/>
</dbReference>
<dbReference type="GO" id="GO:0008016">
    <property type="term" value="P:regulation of heart contraction"/>
    <property type="evidence" value="ECO:0000250"/>
    <property type="project" value="UniProtKB"/>
</dbReference>
<dbReference type="GO" id="GO:0006937">
    <property type="term" value="P:regulation of muscle contraction"/>
    <property type="evidence" value="ECO:0007669"/>
    <property type="project" value="InterPro"/>
</dbReference>
<dbReference type="GO" id="GO:0051592">
    <property type="term" value="P:response to calcium ion"/>
    <property type="evidence" value="ECO:0000250"/>
    <property type="project" value="UniProtKB"/>
</dbReference>
<dbReference type="GO" id="GO:0045214">
    <property type="term" value="P:sarcomere organization"/>
    <property type="evidence" value="ECO:0007669"/>
    <property type="project" value="TreeGrafter"/>
</dbReference>
<dbReference type="GO" id="GO:0055010">
    <property type="term" value="P:ventricular cardiac muscle tissue morphogenesis"/>
    <property type="evidence" value="ECO:0000250"/>
    <property type="project" value="UniProtKB"/>
</dbReference>
<dbReference type="FunFam" id="1.20.5.350:FF:000001">
    <property type="entry name" value="Troponin T, fast skeletal muscle"/>
    <property type="match status" value="1"/>
</dbReference>
<dbReference type="Gene3D" id="1.20.5.350">
    <property type="match status" value="1"/>
</dbReference>
<dbReference type="InterPro" id="IPR027707">
    <property type="entry name" value="TNNT"/>
</dbReference>
<dbReference type="InterPro" id="IPR001978">
    <property type="entry name" value="Troponin"/>
</dbReference>
<dbReference type="InterPro" id="IPR038077">
    <property type="entry name" value="Troponin_sf"/>
</dbReference>
<dbReference type="PANTHER" id="PTHR11521">
    <property type="entry name" value="TROPONIN T"/>
    <property type="match status" value="1"/>
</dbReference>
<dbReference type="PANTHER" id="PTHR11521:SF5">
    <property type="entry name" value="TROPONIN T, CARDIAC MUSCLE"/>
    <property type="match status" value="1"/>
</dbReference>
<dbReference type="Pfam" id="PF00992">
    <property type="entry name" value="Troponin"/>
    <property type="match status" value="2"/>
</dbReference>
<dbReference type="SUPFAM" id="SSF90250">
    <property type="entry name" value="Troponin coil-coiled subunits"/>
    <property type="match status" value="1"/>
</dbReference>
<comment type="function">
    <text>Troponin T is the tropomyosin-binding subunit of troponin, the thin filament regulatory complex which confers calcium-sensitivity to striated muscle actomyosin ATPase activity.</text>
</comment>
<comment type="subunit">
    <text>Binds with troponins I and C to make the thin-filament regulatory complex, troponin.</text>
</comment>
<comment type="alternative products">
    <event type="alternative splicing"/>
    <isoform>
        <id>P09741-1</id>
        <name>CTNT1</name>
        <sequence type="displayed"/>
    </isoform>
    <isoform>
        <id>P09741-2</id>
        <name>CTNT2</name>
        <sequence type="described" ref="VSP_006651"/>
    </isoform>
    <isoform>
        <id>P09741-3</id>
        <name>CTNT3</name>
        <sequence type="described" ref="VSP_006652"/>
    </isoform>
    <isoform>
        <id>P09741-4</id>
        <name>CTNT4</name>
        <sequence type="described" ref="VSP_006651 VSP_006652"/>
    </isoform>
</comment>
<comment type="tissue specificity">
    <text>The major isoform in adult heart is CTNT4.</text>
</comment>
<comment type="PTM">
    <text evidence="1">Phosphorylation at Thr-216 by PRKCA induces significant reduction in myofilament calcium sensitivity and actomyosin ATPase activity.</text>
</comment>
<comment type="similarity">
    <text evidence="7">Belongs to the troponin T family.</text>
</comment>
<comment type="sequence caution" evidence="7">
    <conflict type="erroneous initiation">
        <sequence resource="EMBL-CDS" id="AAB51160"/>
    </conflict>
</comment>
<evidence type="ECO:0000250" key="1"/>
<evidence type="ECO:0000250" key="2">
    <source>
        <dbReference type="UniProtKB" id="P13789"/>
    </source>
</evidence>
<evidence type="ECO:0000250" key="3">
    <source>
        <dbReference type="UniProtKB" id="P50752"/>
    </source>
</evidence>
<evidence type="ECO:0000256" key="4">
    <source>
        <dbReference type="SAM" id="MobiDB-lite"/>
    </source>
</evidence>
<evidence type="ECO:0000269" key="5">
    <source>
    </source>
</evidence>
<evidence type="ECO:0000269" key="6">
    <source>
    </source>
</evidence>
<evidence type="ECO:0000305" key="7"/>
<feature type="initiator methionine" description="Removed" evidence="5">
    <location>
        <position position="1"/>
    </location>
</feature>
<feature type="chain" id="PRO_0000186175" description="Troponin T, cardiac muscle">
    <location>
        <begin position="2"/>
        <end position="301"/>
    </location>
</feature>
<feature type="region of interest" description="Disordered" evidence="4">
    <location>
        <begin position="1"/>
        <end position="99"/>
    </location>
</feature>
<feature type="region of interest" description="Disordered" evidence="4">
    <location>
        <begin position="125"/>
        <end position="223"/>
    </location>
</feature>
<feature type="compositionally biased region" description="Acidic residues" evidence="4">
    <location>
        <begin position="1"/>
        <end position="42"/>
    </location>
</feature>
<feature type="compositionally biased region" description="Acidic residues" evidence="4">
    <location>
        <begin position="50"/>
        <end position="74"/>
    </location>
</feature>
<feature type="compositionally biased region" description="Pro residues" evidence="4">
    <location>
        <begin position="82"/>
        <end position="93"/>
    </location>
</feature>
<feature type="compositionally biased region" description="Basic and acidic residues" evidence="4">
    <location>
        <begin position="125"/>
        <end position="186"/>
    </location>
</feature>
<feature type="compositionally biased region" description="Basic and acidic residues" evidence="4">
    <location>
        <begin position="206"/>
        <end position="223"/>
    </location>
</feature>
<feature type="modified residue" description="N-acetylserine" evidence="5">
    <location>
        <position position="2"/>
    </location>
</feature>
<feature type="modified residue" description="Phosphoserine; by CK2" evidence="6">
    <location>
        <position position="2"/>
    </location>
</feature>
<feature type="modified residue" description="Phosphothreonine; by PKC/PRKCA" evidence="2">
    <location>
        <position position="207"/>
    </location>
</feature>
<feature type="modified residue" description="Phosphoserine; by PKC/PRKCA" evidence="3">
    <location>
        <position position="211"/>
    </location>
</feature>
<feature type="modified residue" description="Phosphothreonine; by PKC/PRKCA and RAF1" evidence="2">
    <location>
        <position position="216"/>
    </location>
</feature>
<feature type="modified residue" description="Phosphothreonine; by PKC/PRKCA" evidence="2">
    <location>
        <position position="297"/>
    </location>
</feature>
<feature type="splice variant" id="VSP_006651" description="In isoform CTNT2 and isoform CTNT4." evidence="7">
    <location>
        <begin position="17"/>
        <end position="22"/>
    </location>
</feature>
<feature type="splice variant" id="VSP_006652" description="In isoform CTNT3 and isoform CTNT4." evidence="7">
    <location>
        <begin position="24"/>
        <end position="33"/>
    </location>
</feature>
<feature type="sequence conflict" description="In Ref. 2; AA sequence." evidence="7" ref="2">
    <original>EQEAEEAAAEEEDWREDEDE</original>
    <variation>QQAG</variation>
    <location>
        <begin position="14"/>
        <end position="33"/>
    </location>
</feature>
<feature type="sequence conflict" description="In Ref. 2; AA sequence." evidence="7" ref="2">
    <location>
        <begin position="17"/>
        <end position="32"/>
    </location>
</feature>
<feature type="sequence conflict" description="In Ref. 2; AA sequence." evidence="7" ref="2">
    <original>EEEE</original>
    <variation>AGGG</variation>
    <location>
        <begin position="38"/>
        <end position="41"/>
    </location>
</feature>
<feature type="sequence conflict" description="In Ref. 2; AA sequence." evidence="7" ref="2">
    <original>R</original>
    <variation>A</variation>
    <location>
        <position position="46"/>
    </location>
</feature>
<feature type="sequence conflict" description="In Ref. 2; AA sequence." evidence="7" ref="2">
    <original>D</original>
    <variation>E</variation>
    <location>
        <position position="139"/>
    </location>
</feature>
<feature type="sequence conflict" description="In Ref. 2; AA sequence." evidence="7" ref="2">
    <original>D</original>
    <variation>ER</variation>
    <location>
        <position position="147"/>
    </location>
</feature>
<feature type="sequence conflict" description="In Ref. 2; AA sequence." evidence="7" ref="2">
    <original>E</original>
    <variation>D</variation>
    <location>
        <position position="184"/>
    </location>
</feature>
<feature type="sequence conflict" description="In Ref. 2; AA sequence." evidence="7" ref="2">
    <location>
        <begin position="206"/>
        <end position="214"/>
    </location>
</feature>
<sequence>MSDLEEVVEEYEEEQEAEEAAAEEEDWREDEDEQEAGEEEEAGGGREAEAETEETQAEEDGQEEEDKEDEDGPVEESKPKPRPFMPNLVPPKIPDGERVDFDDIHRKRMEKDLNELQTLIEAHFENRKKEEEELVSLKDRIEKRRADAEQLRIRAEREKERQNRLAEERARREEEESRRKAEDEARKKKALSNMMHFGGYIQKQAQTERKSGKRQTEREKKKKILAERRKVLAIDHLNEDQLREKAKELWQSIYNLEAEKFDLQEKFKQQKYEINVLRNRINDNQKVSKTRGKAKVTGRWK</sequence>
<gene>
    <name type="primary">TNNT2</name>
</gene>
<proteinExistence type="evidence at protein level"/>
<organism>
    <name type="scientific">Oryctolagus cuniculus</name>
    <name type="common">Rabbit</name>
    <dbReference type="NCBI Taxonomy" id="9986"/>
    <lineage>
        <taxon>Eukaryota</taxon>
        <taxon>Metazoa</taxon>
        <taxon>Chordata</taxon>
        <taxon>Craniata</taxon>
        <taxon>Vertebrata</taxon>
        <taxon>Euteleostomi</taxon>
        <taxon>Mammalia</taxon>
        <taxon>Eutheria</taxon>
        <taxon>Euarchontoglires</taxon>
        <taxon>Glires</taxon>
        <taxon>Lagomorpha</taxon>
        <taxon>Leporidae</taxon>
        <taxon>Oryctolagus</taxon>
    </lineage>
</organism>
<accession>P09741</accession>
<accession>P09742</accession>
<protein>
    <recommendedName>
        <fullName>Troponin T, cardiac muscle</fullName>
        <shortName>TnTc</shortName>
    </recommendedName>
    <alternativeName>
        <fullName>Cardiac muscle troponin T</fullName>
        <shortName>cTnT</shortName>
    </alternativeName>
</protein>